<protein>
    <recommendedName>
        <fullName evidence="3">Cliotide T20</fullName>
    </recommendedName>
    <alternativeName>
        <fullName evidence="3">Cyclotide cT20</fullName>
    </alternativeName>
</protein>
<name>CYC20_CLITE</name>
<accession>C0HJS7</accession>
<proteinExistence type="evidence at protein level"/>
<reference evidence="4" key="1">
    <citation type="journal article" date="2016" name="FEBS J.">
        <title>Immunostimulating and Gram-negative-specific antibacterial cyclotides from the butterfly pea Clitoria ternatea.</title>
        <authorList>
            <person name="Nguyen K.N."/>
            <person name="Nguyen G.K."/>
            <person name="Nguyen P.Q."/>
            <person name="Ang K.H."/>
            <person name="Dedon P.C."/>
            <person name="Tam J.P."/>
        </authorList>
    </citation>
    <scope>PROTEIN SEQUENCE</scope>
    <scope>FUNCTION</scope>
    <scope>TISSUE SPECIFICITY</scope>
    <scope>CYCLIZATION</scope>
    <scope>PRESENCE OF DISULFIDE BONDS</scope>
    <scope>MASS SPECTROMETRY</scope>
    <scope>IDENTIFICATION BY MASS SPECTROMETRY</scope>
</reference>
<organism evidence="3">
    <name type="scientific">Clitoria ternatea</name>
    <name type="common">Butterfly pea</name>
    <dbReference type="NCBI Taxonomy" id="43366"/>
    <lineage>
        <taxon>Eukaryota</taxon>
        <taxon>Viridiplantae</taxon>
        <taxon>Streptophyta</taxon>
        <taxon>Embryophyta</taxon>
        <taxon>Tracheophyta</taxon>
        <taxon>Spermatophyta</taxon>
        <taxon>Magnoliopsida</taxon>
        <taxon>eudicotyledons</taxon>
        <taxon>Gunneridae</taxon>
        <taxon>Pentapetalae</taxon>
        <taxon>rosids</taxon>
        <taxon>fabids</taxon>
        <taxon>Fabales</taxon>
        <taxon>Fabaceae</taxon>
        <taxon>Papilionoideae</taxon>
        <taxon>50 kb inversion clade</taxon>
        <taxon>NPAAA clade</taxon>
        <taxon>indigoferoid/millettioid clade</taxon>
        <taxon>Phaseoleae</taxon>
        <taxon>Clitoria</taxon>
    </lineage>
</organism>
<evidence type="ECO:0000255" key="1">
    <source>
        <dbReference type="PROSITE-ProRule" id="PRU00395"/>
    </source>
</evidence>
<evidence type="ECO:0000269" key="2">
    <source>
    </source>
</evidence>
<evidence type="ECO:0000303" key="3">
    <source>
    </source>
</evidence>
<evidence type="ECO:0000305" key="4"/>
<keyword id="KW-0044">Antibiotic</keyword>
<keyword id="KW-0929">Antimicrobial</keyword>
<keyword id="KW-0903">Direct protein sequencing</keyword>
<keyword id="KW-1015">Disulfide bond</keyword>
<keyword id="KW-0960">Knottin</keyword>
<keyword id="KW-0611">Plant defense</keyword>
<comment type="function">
    <text evidence="1 2">Probably participates in a plant defense mechanism. Active against Gram-negative bacterium E.coli ATCC 700926 (MIC=0.5 uM) under low-salt conditions (PubMed:27007913). Not active against Gram-positive bacterium S.aureus ATCC 12600 up to a concentration of 100 uM under low-salt conditions (PubMed:27007913). Exhibits immunomodulatory activity but no cytotoxicity in vitro.</text>
</comment>
<comment type="tissue specificity">
    <text evidence="2">Expressed in root nodules but not in seed.</text>
</comment>
<comment type="domain">
    <text evidence="4">The presence of a 'disulfide through disulfide knot' structurally defines this protein as a knottin.</text>
</comment>
<comment type="PTM">
    <text evidence="2">Contains 3 disulfide bonds.</text>
</comment>
<comment type="PTM">
    <text evidence="1 2">This is a cyclic peptide.</text>
</comment>
<comment type="mass spectrometry" mass="3151.403" method="MALDI" evidence="2"/>
<comment type="similarity">
    <text evidence="3">Belongs to the cyclotide family. Moebius subfamily.</text>
</comment>
<dbReference type="SMR" id="C0HJS7"/>
<dbReference type="GO" id="GO:0042742">
    <property type="term" value="P:defense response to bacterium"/>
    <property type="evidence" value="ECO:0007669"/>
    <property type="project" value="UniProtKB-KW"/>
</dbReference>
<dbReference type="InterPro" id="IPR005535">
    <property type="entry name" value="Cyclotide"/>
</dbReference>
<dbReference type="InterPro" id="IPR036146">
    <property type="entry name" value="Cyclotide_sf"/>
</dbReference>
<dbReference type="Pfam" id="PF03784">
    <property type="entry name" value="Cyclotide"/>
    <property type="match status" value="1"/>
</dbReference>
<dbReference type="PIRSF" id="PIRSF037891">
    <property type="entry name" value="Cycloviolacin"/>
    <property type="match status" value="1"/>
</dbReference>
<dbReference type="SUPFAM" id="SSF57038">
    <property type="entry name" value="Cyclotides"/>
    <property type="match status" value="1"/>
</dbReference>
<dbReference type="PROSITE" id="PS51052">
    <property type="entry name" value="CYCLOTIDE"/>
    <property type="match status" value="1"/>
</dbReference>
<sequence length="30" mass="3178">GSAIRCGESCLLGKCYTPGCTCDRPICKKN</sequence>
<feature type="peptide" id="PRO_0000436317" description="Cliotide T20" evidence="2">
    <location>
        <begin position="1"/>
        <end position="30"/>
    </location>
</feature>
<feature type="disulfide bond" evidence="1">
    <location>
        <begin position="6"/>
        <end position="20"/>
    </location>
</feature>
<feature type="disulfide bond" evidence="1">
    <location>
        <begin position="10"/>
        <end position="22"/>
    </location>
</feature>
<feature type="disulfide bond" evidence="1">
    <location>
        <begin position="15"/>
        <end position="27"/>
    </location>
</feature>
<feature type="cross-link" description="Cyclopeptide (Gly-Asn)" evidence="2">
    <location>
        <begin position="1"/>
        <end position="30"/>
    </location>
</feature>